<keyword id="KW-1035">Host cytoplasm</keyword>
<keyword id="KW-1048">Host nucleus</keyword>
<keyword id="KW-1185">Reference proteome</keyword>
<keyword id="KW-0964">Secreted</keyword>
<keyword id="KW-0732">Signal</keyword>
<keyword id="KW-0843">Virulence</keyword>
<evidence type="ECO:0000255" key="1"/>
<evidence type="ECO:0000256" key="2">
    <source>
        <dbReference type="SAM" id="MobiDB-lite"/>
    </source>
</evidence>
<evidence type="ECO:0000269" key="3">
    <source>
    </source>
</evidence>
<evidence type="ECO:0000303" key="4">
    <source>
    </source>
</evidence>
<evidence type="ECO:0000305" key="5"/>
<evidence type="ECO:0000305" key="6">
    <source>
    </source>
</evidence>
<gene>
    <name evidence="4" type="primary">RXLR-C02</name>
</gene>
<proteinExistence type="evidence at transcript level"/>
<accession>A0A0P1A544</accession>
<comment type="function">
    <text evidence="3">Secreted effector that suppresses pattern-triggered immunity (PTI) in plant host.</text>
</comment>
<comment type="subcellular location">
    <subcellularLocation>
        <location evidence="3">Secreted</location>
    </subcellularLocation>
    <subcellularLocation>
        <location evidence="3">Host cytoplasm</location>
    </subcellularLocation>
    <subcellularLocation>
        <location evidence="3">Host nucleus</location>
    </subcellularLocation>
</comment>
<comment type="induction">
    <text evidence="3">Expression is up-regulated in spores.</text>
</comment>
<comment type="domain">
    <text evidence="6">Has the canonical translocation RxLR motif, but lacks the canonical EER motif, which characterizes most oomycete effectors identified so far.</text>
</comment>
<comment type="similarity">
    <text evidence="5">Belongs to the RxLR effector family.</text>
</comment>
<name>RLR02_PLAHL</name>
<organism>
    <name type="scientific">Plasmopara halstedii</name>
    <name type="common">Downy mildew of sunflower</name>
    <dbReference type="NCBI Taxonomy" id="4781"/>
    <lineage>
        <taxon>Eukaryota</taxon>
        <taxon>Sar</taxon>
        <taxon>Stramenopiles</taxon>
        <taxon>Oomycota</taxon>
        <taxon>Peronosporales</taxon>
        <taxon>Peronosporaceae</taxon>
        <taxon>Plasmopara</taxon>
    </lineage>
</organism>
<sequence length="92" mass="10000">MQFHLLVMTTIAASFAATGSALPHTNVLPKIGTLRGAINNDAATFNGRALRNTENRGLIGDDSDSSISDSDSEAKEYRAYKSHKEHFGYQMP</sequence>
<protein>
    <recommendedName>
        <fullName evidence="4">Secreted RxLR effector protein RXLR-C02</fullName>
    </recommendedName>
</protein>
<dbReference type="EMBL" id="CCYD01000041">
    <property type="protein sequence ID" value="CEG35256.1"/>
    <property type="molecule type" value="Genomic_DNA"/>
</dbReference>
<dbReference type="EnsemblProtists" id="CEG35256">
    <property type="protein sequence ID" value="CEG35256"/>
    <property type="gene ID" value="CEG35256"/>
</dbReference>
<dbReference type="Proteomes" id="UP000054928">
    <property type="component" value="Unassembled WGS sequence"/>
</dbReference>
<dbReference type="GO" id="GO:0005576">
    <property type="term" value="C:extracellular region"/>
    <property type="evidence" value="ECO:0007669"/>
    <property type="project" value="UniProtKB-SubCell"/>
</dbReference>
<dbReference type="GO" id="GO:0030430">
    <property type="term" value="C:host cell cytoplasm"/>
    <property type="evidence" value="ECO:0007669"/>
    <property type="project" value="UniProtKB-SubCell"/>
</dbReference>
<dbReference type="GO" id="GO:0042025">
    <property type="term" value="C:host cell nucleus"/>
    <property type="evidence" value="ECO:0007669"/>
    <property type="project" value="UniProtKB-SubCell"/>
</dbReference>
<feature type="signal peptide" evidence="1">
    <location>
        <begin position="1"/>
        <end position="21"/>
    </location>
</feature>
<feature type="chain" id="PRO_5006058380" description="Secreted RxLR effector protein RXLR-C02">
    <location>
        <begin position="22"/>
        <end position="92"/>
    </location>
</feature>
<feature type="region of interest" description="Disordered" evidence="2">
    <location>
        <begin position="54"/>
        <end position="75"/>
    </location>
</feature>
<feature type="short sequence motif" description="RxLR" evidence="6">
    <location>
        <begin position="48"/>
        <end position="51"/>
    </location>
</feature>
<reference key="1">
    <citation type="journal article" date="2015" name="BMC Genomics">
        <title>Genome analyses of the sunflower pathogen Plasmopara halstedii provide insights into effector evolution in downy mildews and Phytophthora.</title>
        <authorList>
            <person name="Sharma R."/>
            <person name="Xia X."/>
            <person name="Cano L.M."/>
            <person name="Evangelisti E."/>
            <person name="Kemen E."/>
            <person name="Judelson H."/>
            <person name="Oome S."/>
            <person name="Sambles C."/>
            <person name="van den Hoogen D.J."/>
            <person name="Kitner M."/>
            <person name="Klein J."/>
            <person name="Meijer H.J."/>
            <person name="Spring O."/>
            <person name="Win J."/>
            <person name="Zipper R."/>
            <person name="Bode H.B."/>
            <person name="Govers F."/>
            <person name="Kamoun S."/>
            <person name="Schornack S."/>
            <person name="Studholme D.J."/>
            <person name="Van den Ackerveken G."/>
            <person name="Thines M."/>
        </authorList>
    </citation>
    <scope>NUCLEOTIDE SEQUENCE [LARGE SCALE GENOMIC DNA]</scope>
</reference>
<reference key="2">
    <citation type="journal article" date="2019" name="Plant J.">
        <title>Sunflower resistance to multiple downy mildew pathotypes revealed by recognition of conserved effectors of the oomycete Plasmopara halstedii.</title>
        <authorList>
            <person name="Pecrix Y."/>
            <person name="Buendia L."/>
            <person name="Penouilh-Suzette C."/>
            <person name="Marechaux M."/>
            <person name="Legrand L."/>
            <person name="Bouchez O."/>
            <person name="Rengel D."/>
            <person name="Gouzy J."/>
            <person name="Cottret L."/>
            <person name="Vear F."/>
            <person name="Godiard L."/>
        </authorList>
    </citation>
    <scope>DOMAIN</scope>
    <scope>INDUCTION</scope>
    <scope>FUNCTION</scope>
    <scope>SUBCELLULAR LOCATION</scope>
</reference>